<proteinExistence type="inferred from homology"/>
<protein>
    <recommendedName>
        <fullName evidence="1">Large ribosomal subunit protein bL31B</fullName>
    </recommendedName>
    <alternativeName>
        <fullName evidence="2">50S ribosomal protein L31 type B</fullName>
    </alternativeName>
</protein>
<reference key="1">
    <citation type="journal article" date="2005" name="Proc. Natl. Acad. Sci. U.S.A.">
        <title>Complete genome sequence of the probiotic lactic acid bacterium Lactobacillus acidophilus NCFM.</title>
        <authorList>
            <person name="Altermann E."/>
            <person name="Russell W.M."/>
            <person name="Azcarate-Peril M.A."/>
            <person name="Barrangou R."/>
            <person name="Buck B.L."/>
            <person name="McAuliffe O."/>
            <person name="Souther N."/>
            <person name="Dobson A."/>
            <person name="Duong T."/>
            <person name="Callanan M."/>
            <person name="Lick S."/>
            <person name="Hamrick A."/>
            <person name="Cano R."/>
            <person name="Klaenhammer T.R."/>
        </authorList>
    </citation>
    <scope>NUCLEOTIDE SEQUENCE [LARGE SCALE GENOMIC DNA]</scope>
    <source>
        <strain>ATCC 700396 / NCK56 / N2 / NCFM</strain>
    </source>
</reference>
<dbReference type="EMBL" id="CP000033">
    <property type="protein sequence ID" value="AAV42158.1"/>
    <property type="molecule type" value="Genomic_DNA"/>
</dbReference>
<dbReference type="RefSeq" id="WP_003548978.1">
    <property type="nucleotide sequence ID" value="NC_006814.3"/>
</dbReference>
<dbReference type="RefSeq" id="YP_193189.1">
    <property type="nucleotide sequence ID" value="NC_006814.3"/>
</dbReference>
<dbReference type="SMR" id="Q5FMB6"/>
<dbReference type="STRING" id="272621.LBA0265"/>
<dbReference type="KEGG" id="lac:LBA0265"/>
<dbReference type="PATRIC" id="fig|272621.13.peg.250"/>
<dbReference type="eggNOG" id="COG0254">
    <property type="taxonomic scope" value="Bacteria"/>
</dbReference>
<dbReference type="HOGENOM" id="CLU_114306_2_2_9"/>
<dbReference type="OrthoDB" id="9803251at2"/>
<dbReference type="BioCyc" id="LACI272621:G1G49-256-MONOMER"/>
<dbReference type="Proteomes" id="UP000006381">
    <property type="component" value="Chromosome"/>
</dbReference>
<dbReference type="GO" id="GO:1990904">
    <property type="term" value="C:ribonucleoprotein complex"/>
    <property type="evidence" value="ECO:0007669"/>
    <property type="project" value="UniProtKB-KW"/>
</dbReference>
<dbReference type="GO" id="GO:0005840">
    <property type="term" value="C:ribosome"/>
    <property type="evidence" value="ECO:0007669"/>
    <property type="project" value="UniProtKB-KW"/>
</dbReference>
<dbReference type="GO" id="GO:0003735">
    <property type="term" value="F:structural constituent of ribosome"/>
    <property type="evidence" value="ECO:0007669"/>
    <property type="project" value="InterPro"/>
</dbReference>
<dbReference type="GO" id="GO:0006412">
    <property type="term" value="P:translation"/>
    <property type="evidence" value="ECO:0007669"/>
    <property type="project" value="UniProtKB-UniRule"/>
</dbReference>
<dbReference type="Gene3D" id="4.10.830.30">
    <property type="entry name" value="Ribosomal protein L31"/>
    <property type="match status" value="1"/>
</dbReference>
<dbReference type="HAMAP" id="MF_00502">
    <property type="entry name" value="Ribosomal_bL31_2"/>
    <property type="match status" value="1"/>
</dbReference>
<dbReference type="InterPro" id="IPR034704">
    <property type="entry name" value="Ribosomal_bL28/bL31-like_sf"/>
</dbReference>
<dbReference type="InterPro" id="IPR002150">
    <property type="entry name" value="Ribosomal_bL31"/>
</dbReference>
<dbReference type="InterPro" id="IPR027493">
    <property type="entry name" value="Ribosomal_bL31_B"/>
</dbReference>
<dbReference type="InterPro" id="IPR042105">
    <property type="entry name" value="Ribosomal_bL31_sf"/>
</dbReference>
<dbReference type="NCBIfam" id="TIGR00105">
    <property type="entry name" value="L31"/>
    <property type="match status" value="1"/>
</dbReference>
<dbReference type="NCBIfam" id="NF002462">
    <property type="entry name" value="PRK01678.1"/>
    <property type="match status" value="1"/>
</dbReference>
<dbReference type="PANTHER" id="PTHR33280">
    <property type="entry name" value="50S RIBOSOMAL PROTEIN L31, CHLOROPLASTIC"/>
    <property type="match status" value="1"/>
</dbReference>
<dbReference type="PANTHER" id="PTHR33280:SF1">
    <property type="entry name" value="LARGE RIBOSOMAL SUBUNIT PROTEIN BL31C"/>
    <property type="match status" value="1"/>
</dbReference>
<dbReference type="Pfam" id="PF01197">
    <property type="entry name" value="Ribosomal_L31"/>
    <property type="match status" value="1"/>
</dbReference>
<dbReference type="PRINTS" id="PR01249">
    <property type="entry name" value="RIBOSOMALL31"/>
</dbReference>
<dbReference type="SUPFAM" id="SSF143800">
    <property type="entry name" value="L28p-like"/>
    <property type="match status" value="1"/>
</dbReference>
<dbReference type="PROSITE" id="PS01143">
    <property type="entry name" value="RIBOSOMAL_L31"/>
    <property type="match status" value="1"/>
</dbReference>
<comment type="subunit">
    <text evidence="1">Part of the 50S ribosomal subunit.</text>
</comment>
<comment type="similarity">
    <text evidence="1">Belongs to the bacterial ribosomal protein bL31 family. Type B subfamily.</text>
</comment>
<name>RL31B_LACAC</name>
<keyword id="KW-1185">Reference proteome</keyword>
<keyword id="KW-0687">Ribonucleoprotein</keyword>
<keyword id="KW-0689">Ribosomal protein</keyword>
<gene>
    <name evidence="1" type="primary">rpmE2</name>
    <name type="ordered locus">LBA0265</name>
</gene>
<feature type="chain" id="PRO_0000173229" description="Large ribosomal subunit protein bL31B">
    <location>
        <begin position="1"/>
        <end position="81"/>
    </location>
</feature>
<accession>Q5FMB6</accession>
<sequence>MKQGIHPDFQKVVFMDSATGAKFVAGSTMKPEETIEYEGETYPLVRVEVSSDSHPFYTGKQKFAQADGRIEKFNKKYGLKK</sequence>
<organism>
    <name type="scientific">Lactobacillus acidophilus (strain ATCC 700396 / NCK56 / N2 / NCFM)</name>
    <dbReference type="NCBI Taxonomy" id="272621"/>
    <lineage>
        <taxon>Bacteria</taxon>
        <taxon>Bacillati</taxon>
        <taxon>Bacillota</taxon>
        <taxon>Bacilli</taxon>
        <taxon>Lactobacillales</taxon>
        <taxon>Lactobacillaceae</taxon>
        <taxon>Lactobacillus</taxon>
    </lineage>
</organism>
<evidence type="ECO:0000255" key="1">
    <source>
        <dbReference type="HAMAP-Rule" id="MF_00502"/>
    </source>
</evidence>
<evidence type="ECO:0000305" key="2"/>